<accession>P50447</accession>
<evidence type="ECO:0000250" key="1"/>
<evidence type="ECO:0000250" key="2">
    <source>
        <dbReference type="UniProtKB" id="P01009"/>
    </source>
</evidence>
<evidence type="ECO:0000255" key="3"/>
<evidence type="ECO:0000305" key="4"/>
<gene>
    <name type="primary">SERPINA1</name>
    <name type="synonym">PI</name>
</gene>
<organism>
    <name type="scientific">Sus scrofa</name>
    <name type="common">Pig</name>
    <dbReference type="NCBI Taxonomy" id="9823"/>
    <lineage>
        <taxon>Eukaryota</taxon>
        <taxon>Metazoa</taxon>
        <taxon>Chordata</taxon>
        <taxon>Craniata</taxon>
        <taxon>Vertebrata</taxon>
        <taxon>Euteleostomi</taxon>
        <taxon>Mammalia</taxon>
        <taxon>Eutheria</taxon>
        <taxon>Laurasiatheria</taxon>
        <taxon>Artiodactyla</taxon>
        <taxon>Suina</taxon>
        <taxon>Suidae</taxon>
        <taxon>Sus</taxon>
    </lineage>
</organism>
<reference key="1">
    <citation type="journal article" date="1996" name="Anim. Genet.">
        <title>Porcine alpha-1-antitrypsin (PI): cDNA sequence, polymorphism and assignment to chromosome 7q2.4-q2.6.</title>
        <authorList>
            <person name="Archibald A.L."/>
            <person name="Couperwhite S."/>
            <person name="Mellink C.H.M."/>
            <person name="Lahbib-Mansais Y."/>
            <person name="Gellin J."/>
        </authorList>
    </citation>
    <scope>NUCLEOTIDE SEQUENCE [MRNA]</scope>
    <source>
        <tissue>Liver</tissue>
    </source>
</reference>
<sequence length="421" mass="47194">MASSSTWGLLLLAGLCCLVPISLAEGLQGHAVQETDVPRHDHEQHQEAACHRIAPNLADFAFSLYRQVARQSNTSNIFLSPVTIARAFAMLSLGTKGATHAEILEGLQFNLTEKAEAEIHEGFQHLLHTLNQPDNQLQLTTGNGLFIDEKAKLVPKFLEDVKNLYHSEAFSINFRDTEEAKKCINDYVEKGSQGKIVDLVDELDKDTVFALVNYIFFKGKWEKPFEVEQTTEEDFHVDEETTVKVPMMNRLGMFDLHHCDKLSSWVLLMDYVATATAFFILPDQGKLHQLEDMLTKEIRAKFLEKRYPSSANLHLPKLTISGTYDLKSLLGNLGITKVFSDEADLSGVTEEQPLKLSKALHRAVLTIDEKGTEATGATILEAIPMSIPPNVKFNKPFLFLIYDTKTKAVLFMGKVMNPTQK</sequence>
<protein>
    <recommendedName>
        <fullName>Alpha-1-antitrypsin</fullName>
    </recommendedName>
    <alternativeName>
        <fullName>Alpha-1 protease inhibitor</fullName>
    </alternativeName>
    <alternativeName>
        <fullName>Alpha-1-antiproteinase</fullName>
    </alternativeName>
    <alternativeName>
        <fullName>Serpin A1</fullName>
    </alternativeName>
</protein>
<dbReference type="EMBL" id="X88780">
    <property type="protein sequence ID" value="CAA61259.1"/>
    <property type="molecule type" value="mRNA"/>
</dbReference>
<dbReference type="RefSeq" id="NP_999560.1">
    <property type="nucleotide sequence ID" value="NM_214395.1"/>
</dbReference>
<dbReference type="SMR" id="P50447"/>
<dbReference type="FunCoup" id="P50447">
    <property type="interactions" value="172"/>
</dbReference>
<dbReference type="STRING" id="9823.ENSSSCP00000002681"/>
<dbReference type="MEROPS" id="I04.001"/>
<dbReference type="GlyCosmos" id="P50447">
    <property type="glycosylation" value="2 sites, No reported glycans"/>
</dbReference>
<dbReference type="GlyGen" id="P50447">
    <property type="glycosylation" value="2 sites"/>
</dbReference>
<dbReference type="PaxDb" id="9823-ENSSSCP00000002681"/>
<dbReference type="PeptideAtlas" id="P50447"/>
<dbReference type="GeneID" id="397688"/>
<dbReference type="KEGG" id="ssc:397688"/>
<dbReference type="CTD" id="5265"/>
<dbReference type="eggNOG" id="KOG2392">
    <property type="taxonomic scope" value="Eukaryota"/>
</dbReference>
<dbReference type="InParanoid" id="P50447"/>
<dbReference type="OrthoDB" id="671595at2759"/>
<dbReference type="Proteomes" id="UP000008227">
    <property type="component" value="Unplaced"/>
</dbReference>
<dbReference type="Proteomes" id="UP000314985">
    <property type="component" value="Unplaced"/>
</dbReference>
<dbReference type="Proteomes" id="UP000694570">
    <property type="component" value="Unplaced"/>
</dbReference>
<dbReference type="Proteomes" id="UP000694571">
    <property type="component" value="Unplaced"/>
</dbReference>
<dbReference type="Proteomes" id="UP000694720">
    <property type="component" value="Unplaced"/>
</dbReference>
<dbReference type="Proteomes" id="UP000694722">
    <property type="component" value="Unplaced"/>
</dbReference>
<dbReference type="Proteomes" id="UP000694723">
    <property type="component" value="Unplaced"/>
</dbReference>
<dbReference type="Proteomes" id="UP000694724">
    <property type="component" value="Unplaced"/>
</dbReference>
<dbReference type="Proteomes" id="UP000694725">
    <property type="component" value="Unplaced"/>
</dbReference>
<dbReference type="Proteomes" id="UP000694726">
    <property type="component" value="Unplaced"/>
</dbReference>
<dbReference type="Proteomes" id="UP000694727">
    <property type="component" value="Unplaced"/>
</dbReference>
<dbReference type="Proteomes" id="UP000694728">
    <property type="component" value="Unplaced"/>
</dbReference>
<dbReference type="GO" id="GO:0005615">
    <property type="term" value="C:extracellular space"/>
    <property type="evidence" value="ECO:0000318"/>
    <property type="project" value="GO_Central"/>
</dbReference>
<dbReference type="GO" id="GO:0004867">
    <property type="term" value="F:serine-type endopeptidase inhibitor activity"/>
    <property type="evidence" value="ECO:0000318"/>
    <property type="project" value="GO_Central"/>
</dbReference>
<dbReference type="CDD" id="cd02056">
    <property type="entry name" value="serpinA1_A1AT"/>
    <property type="match status" value="1"/>
</dbReference>
<dbReference type="FunFam" id="2.30.39.10:FF:000003">
    <property type="entry name" value="alpha-1-antitrypsin isoform X1"/>
    <property type="match status" value="1"/>
</dbReference>
<dbReference type="FunFam" id="3.30.497.10:FF:000001">
    <property type="entry name" value="Serine protease inhibitor"/>
    <property type="match status" value="1"/>
</dbReference>
<dbReference type="FunFam" id="2.10.310.10:FF:000001">
    <property type="entry name" value="Serpin family A member 1"/>
    <property type="match status" value="1"/>
</dbReference>
<dbReference type="Gene3D" id="2.30.39.10">
    <property type="entry name" value="Alpha-1-antitrypsin, domain 1"/>
    <property type="match status" value="1"/>
</dbReference>
<dbReference type="Gene3D" id="3.30.497.10">
    <property type="entry name" value="Antithrombin, subunit I, domain 2"/>
    <property type="match status" value="1"/>
</dbReference>
<dbReference type="Gene3D" id="2.10.310.10">
    <property type="entry name" value="Serpins superfamily"/>
    <property type="match status" value="1"/>
</dbReference>
<dbReference type="InterPro" id="IPR023795">
    <property type="entry name" value="Serpin_CS"/>
</dbReference>
<dbReference type="InterPro" id="IPR023796">
    <property type="entry name" value="Serpin_dom"/>
</dbReference>
<dbReference type="InterPro" id="IPR000215">
    <property type="entry name" value="Serpin_fam"/>
</dbReference>
<dbReference type="InterPro" id="IPR036186">
    <property type="entry name" value="Serpin_sf"/>
</dbReference>
<dbReference type="InterPro" id="IPR042178">
    <property type="entry name" value="Serpin_sf_1"/>
</dbReference>
<dbReference type="InterPro" id="IPR042185">
    <property type="entry name" value="Serpin_sf_2"/>
</dbReference>
<dbReference type="PANTHER" id="PTHR11461:SF165">
    <property type="entry name" value="ALPHA-1-ANTITRYPSIN"/>
    <property type="match status" value="1"/>
</dbReference>
<dbReference type="PANTHER" id="PTHR11461">
    <property type="entry name" value="SERINE PROTEASE INHIBITOR, SERPIN"/>
    <property type="match status" value="1"/>
</dbReference>
<dbReference type="Pfam" id="PF00079">
    <property type="entry name" value="Serpin"/>
    <property type="match status" value="1"/>
</dbReference>
<dbReference type="SMART" id="SM00093">
    <property type="entry name" value="SERPIN"/>
    <property type="match status" value="1"/>
</dbReference>
<dbReference type="SUPFAM" id="SSF56574">
    <property type="entry name" value="Serpins"/>
    <property type="match status" value="1"/>
</dbReference>
<dbReference type="PROSITE" id="PS00284">
    <property type="entry name" value="SERPIN"/>
    <property type="match status" value="1"/>
</dbReference>
<feature type="signal peptide" evidence="3">
    <location>
        <begin position="1"/>
        <end position="24"/>
    </location>
</feature>
<feature type="chain" id="PRO_0000032396" description="Alpha-1-antitrypsin">
    <location>
        <begin position="25"/>
        <end position="421"/>
    </location>
</feature>
<feature type="region of interest" description="RCL">
    <location>
        <begin position="376"/>
        <end position="395"/>
    </location>
</feature>
<feature type="site" description="Reactive bond">
    <location>
        <begin position="385"/>
        <end position="386"/>
    </location>
</feature>
<feature type="modified residue" description="Phosphoserine" evidence="2">
    <location>
        <position position="386"/>
    </location>
</feature>
<feature type="glycosylation site" description="N-linked (GlcNAc...) asparagine" evidence="3">
    <location>
        <position position="73"/>
    </location>
</feature>
<feature type="glycosylation site" description="N-linked (GlcNAc...) asparagine" evidence="3">
    <location>
        <position position="110"/>
    </location>
</feature>
<name>A1AT_PIG</name>
<proteinExistence type="evidence at transcript level"/>
<keyword id="KW-0325">Glycoprotein</keyword>
<keyword id="KW-0597">Phosphoprotein</keyword>
<keyword id="KW-0646">Protease inhibitor</keyword>
<keyword id="KW-1185">Reference proteome</keyword>
<keyword id="KW-0964">Secreted</keyword>
<keyword id="KW-0722">Serine protease inhibitor</keyword>
<keyword id="KW-0732">Signal</keyword>
<comment type="function">
    <text evidence="1">Inhibitor of serine proteases. Its primary target is elastase, but it also has a moderate affinity for plasmin and thrombin (By similarity).</text>
</comment>
<comment type="subunit">
    <text evidence="2">Interacts with CELA2A (By similarity). Interacts with ERGIC3 and LMAN1/ERGIC53 (By similarity). Interacts with PRSS1/Trypsin (By similarity).</text>
</comment>
<comment type="subcellular location">
    <subcellularLocation>
        <location>Secreted</location>
    </subcellularLocation>
</comment>
<comment type="domain">
    <text evidence="1">The reactive center loop (RCL) extends out from the body of the protein and directs binding to the target protease. The protease cleaves the serpin at the reactive site within the RCL, establishing a covalent linkage between the carboxyl group of the serpin reactive site and the serine hydroxyl of the protease. The resulting inactive serpin-protease complex is highly stable (By similarity).</text>
</comment>
<comment type="similarity">
    <text evidence="4">Belongs to the serpin family.</text>
</comment>